<dbReference type="EMBL" id="AE004091">
    <property type="protein sequence ID" value="AAG03519.1"/>
    <property type="molecule type" value="Genomic_DNA"/>
</dbReference>
<dbReference type="PIR" id="B83631">
    <property type="entry name" value="B83631"/>
</dbReference>
<dbReference type="RefSeq" id="NP_248819.1">
    <property type="nucleotide sequence ID" value="NC_002516.2"/>
</dbReference>
<dbReference type="RefSeq" id="WP_003083784.1">
    <property type="nucleotide sequence ID" value="NZ_QZGE01000015.1"/>
</dbReference>
<dbReference type="SMR" id="Q9I703"/>
<dbReference type="FunCoup" id="Q9I703">
    <property type="interactions" value="112"/>
</dbReference>
<dbReference type="STRING" id="208964.PA0129"/>
<dbReference type="PaxDb" id="208964-PA0129"/>
<dbReference type="GeneID" id="880844"/>
<dbReference type="KEGG" id="pae:PA0129"/>
<dbReference type="PATRIC" id="fig|208964.12.peg.134"/>
<dbReference type="PseudoCAP" id="PA0129"/>
<dbReference type="HOGENOM" id="CLU_007946_9_3_6"/>
<dbReference type="InParanoid" id="Q9I703"/>
<dbReference type="OrthoDB" id="5297508at2"/>
<dbReference type="PhylomeDB" id="Q9I703"/>
<dbReference type="BioCyc" id="PAER208964:G1FZ6-131-MONOMER"/>
<dbReference type="Proteomes" id="UP000002438">
    <property type="component" value="Chromosome"/>
</dbReference>
<dbReference type="GO" id="GO:0016020">
    <property type="term" value="C:membrane"/>
    <property type="evidence" value="ECO:0007669"/>
    <property type="project" value="UniProtKB-SubCell"/>
</dbReference>
<dbReference type="GO" id="GO:0015185">
    <property type="term" value="F:gamma-aminobutyric acid transmembrane transporter activity"/>
    <property type="evidence" value="ECO:0007669"/>
    <property type="project" value="InterPro"/>
</dbReference>
<dbReference type="GO" id="GO:0019483">
    <property type="term" value="P:beta-alanine biosynthetic process"/>
    <property type="evidence" value="ECO:0000314"/>
    <property type="project" value="PseudoCAP"/>
</dbReference>
<dbReference type="FunFam" id="1.20.1740.10:FF:000001">
    <property type="entry name" value="Amino acid permease"/>
    <property type="match status" value="1"/>
</dbReference>
<dbReference type="Gene3D" id="1.20.1740.10">
    <property type="entry name" value="Amino acid/polyamine transporter I"/>
    <property type="match status" value="1"/>
</dbReference>
<dbReference type="InterPro" id="IPR004841">
    <property type="entry name" value="AA-permease/SLC12A_dom"/>
</dbReference>
<dbReference type="InterPro" id="IPR004840">
    <property type="entry name" value="Amino_acid_permease_CS"/>
</dbReference>
<dbReference type="InterPro" id="IPR011265">
    <property type="entry name" value="GABA_permease"/>
</dbReference>
<dbReference type="NCBIfam" id="TIGR01773">
    <property type="entry name" value="GABAperm"/>
    <property type="match status" value="1"/>
</dbReference>
<dbReference type="PANTHER" id="PTHR43495">
    <property type="entry name" value="GABA PERMEASE"/>
    <property type="match status" value="1"/>
</dbReference>
<dbReference type="PANTHER" id="PTHR43495:SF5">
    <property type="entry name" value="GAMMA-AMINOBUTYRIC ACID PERMEASE"/>
    <property type="match status" value="1"/>
</dbReference>
<dbReference type="Pfam" id="PF00324">
    <property type="entry name" value="AA_permease"/>
    <property type="match status" value="1"/>
</dbReference>
<dbReference type="PIRSF" id="PIRSF006060">
    <property type="entry name" value="AA_transporter"/>
    <property type="match status" value="1"/>
</dbReference>
<dbReference type="PROSITE" id="PS00218">
    <property type="entry name" value="AMINO_ACID_PERMEASE_1"/>
    <property type="match status" value="1"/>
</dbReference>
<sequence length="475" mass="51313">MSKVVLASQLPNKRNASLAPGLKQRHVTMLSIAGVIGAGLFVGSGHAIAAAGPAALLAYLIAGTLVVLVMRMLGEMAVASPDTGSFSTYADRSIGRWAGFTIGWLYWWFWVLVIPLEAIAAAAILNAWFPAIDTWIFALAVTFLLTVTNLFSVARYGEFEFWFALLKVIAIIAFIVLGAVAIVGGLPEREVSGLSSLMASHGGFVPNGYGAVLGALLTTMFSFMGTEIVTIAAAESKDPAKQITRATNSVIWRIGLFYLVSIFIVISIVPWNDPLLIQVGSYQRALELLDIPHAKLIVDLVVLVAVASCLNSAIYTSSRMVFSLAKRGDAPSVLKLTNTAHVPRPAVLASTAVGFLTTIVNYFAPEKVFTFLLASSGAVALLVYLVIAVAQLRMRKQLQASGQPIEFRMWLYPWLTWAVILFIVAALSIMLIMPEHRHEVFATALLTIFTVCLGLLNARRKPRLGEDYAGKTARV</sequence>
<gene>
    <name type="primary">bauD</name>
    <name type="synonym">gabP</name>
    <name type="ordered locus">PA0129</name>
</gene>
<accession>Q9I703</accession>
<name>BAUD_PSEAE</name>
<protein>
    <recommendedName>
        <fullName>Probable GABA permease</fullName>
    </recommendedName>
    <alternativeName>
        <fullName>4-amino butyrate transport carrier</fullName>
    </alternativeName>
    <alternativeName>
        <fullName>Gamma-aminobutyrate permease</fullName>
    </alternativeName>
</protein>
<feature type="chain" id="PRO_0000428973" description="Probable GABA permease">
    <location>
        <begin position="1"/>
        <end position="475"/>
    </location>
</feature>
<feature type="transmembrane region" description="Helical" evidence="1">
    <location>
        <begin position="27"/>
        <end position="47"/>
    </location>
</feature>
<feature type="transmembrane region" description="Helical" evidence="1">
    <location>
        <begin position="48"/>
        <end position="68"/>
    </location>
</feature>
<feature type="transmembrane region" description="Helical" evidence="1">
    <location>
        <begin position="105"/>
        <end position="125"/>
    </location>
</feature>
<feature type="transmembrane region" description="Helical" evidence="1">
    <location>
        <begin position="127"/>
        <end position="147"/>
    </location>
</feature>
<feature type="transmembrane region" description="Helical" evidence="1">
    <location>
        <begin position="163"/>
        <end position="183"/>
    </location>
</feature>
<feature type="transmembrane region" description="Helical" evidence="1">
    <location>
        <begin position="211"/>
        <end position="231"/>
    </location>
</feature>
<feature type="transmembrane region" description="Helical" evidence="1">
    <location>
        <begin position="250"/>
        <end position="270"/>
    </location>
</feature>
<feature type="transmembrane region" description="Helical" evidence="1">
    <location>
        <begin position="296"/>
        <end position="316"/>
    </location>
</feature>
<feature type="transmembrane region" description="Helical" evidence="1">
    <location>
        <begin position="345"/>
        <end position="365"/>
    </location>
</feature>
<feature type="transmembrane region" description="Helical" evidence="1">
    <location>
        <begin position="368"/>
        <end position="388"/>
    </location>
</feature>
<feature type="transmembrane region" description="Helical" evidence="1">
    <location>
        <begin position="413"/>
        <end position="433"/>
    </location>
</feature>
<feature type="transmembrane region" description="Helical" evidence="1">
    <location>
        <begin position="438"/>
        <end position="458"/>
    </location>
</feature>
<organism>
    <name type="scientific">Pseudomonas aeruginosa (strain ATCC 15692 / DSM 22644 / CIP 104116 / JCM 14847 / LMG 12228 / 1C / PRS 101 / PAO1)</name>
    <dbReference type="NCBI Taxonomy" id="208964"/>
    <lineage>
        <taxon>Bacteria</taxon>
        <taxon>Pseudomonadati</taxon>
        <taxon>Pseudomonadota</taxon>
        <taxon>Gammaproteobacteria</taxon>
        <taxon>Pseudomonadales</taxon>
        <taxon>Pseudomonadaceae</taxon>
        <taxon>Pseudomonas</taxon>
    </lineage>
</organism>
<comment type="function">
    <text evidence="2">Involved in the degradation of beta-alanine.</text>
</comment>
<comment type="subcellular location">
    <subcellularLocation>
        <location evidence="3">Membrane</location>
        <topology evidence="3">Multi-pass membrane protein</topology>
    </subcellularLocation>
</comment>
<comment type="induction">
    <text evidence="2">Activated by BauR.</text>
</comment>
<comment type="disruption phenotype">
    <text evidence="2">Cells lacking this gene grow normally on putrescine, cadaverine, and GABA, but growth on beta-alanine is completely abolished.</text>
</comment>
<comment type="similarity">
    <text evidence="3">Belongs to the amino acid-polyamine-organocation (APC) superfamily. Amino acid transporter (AAT) (TC 2.A.3.1) family.</text>
</comment>
<reference key="1">
    <citation type="journal article" date="2000" name="Nature">
        <title>Complete genome sequence of Pseudomonas aeruginosa PAO1, an opportunistic pathogen.</title>
        <authorList>
            <person name="Stover C.K."/>
            <person name="Pham X.-Q.T."/>
            <person name="Erwin A.L."/>
            <person name="Mizoguchi S.D."/>
            <person name="Warrener P."/>
            <person name="Hickey M.J."/>
            <person name="Brinkman F.S.L."/>
            <person name="Hufnagle W.O."/>
            <person name="Kowalik D.J."/>
            <person name="Lagrou M."/>
            <person name="Garber R.L."/>
            <person name="Goltry L."/>
            <person name="Tolentino E."/>
            <person name="Westbrock-Wadman S."/>
            <person name="Yuan Y."/>
            <person name="Brody L.L."/>
            <person name="Coulter S.N."/>
            <person name="Folger K.R."/>
            <person name="Kas A."/>
            <person name="Larbig K."/>
            <person name="Lim R.M."/>
            <person name="Smith K.A."/>
            <person name="Spencer D.H."/>
            <person name="Wong G.K.-S."/>
            <person name="Wu Z."/>
            <person name="Paulsen I.T."/>
            <person name="Reizer J."/>
            <person name="Saier M.H. Jr."/>
            <person name="Hancock R.E.W."/>
            <person name="Lory S."/>
            <person name="Olson M.V."/>
        </authorList>
    </citation>
    <scope>NUCLEOTIDE SEQUENCE [LARGE SCALE GENOMIC DNA]</scope>
    <source>
        <strain>ATCC 15692 / DSM 22644 / CIP 104116 / JCM 14847 / LMG 12228 / 1C / PRS 101 / PAO1</strain>
    </source>
</reference>
<reference key="2">
    <citation type="journal article" date="2011" name="J. Bacteriol.">
        <title>Functional characterization of seven gamma-glutamylpolyamine synthetase genes and the bauRABCD locus for polyamine and beta-alanine utilization in Pseudomonas aeruginosa PAO1.</title>
        <authorList>
            <person name="Yao X."/>
            <person name="He W."/>
            <person name="Lu C.D."/>
        </authorList>
    </citation>
    <scope>FUNCTION</scope>
    <scope>INDUCTION</scope>
    <scope>DISRUPTION PHENOTYPE</scope>
</reference>
<proteinExistence type="evidence at transcript level"/>
<keyword id="KW-0029">Amino-acid transport</keyword>
<keyword id="KW-0472">Membrane</keyword>
<keyword id="KW-1185">Reference proteome</keyword>
<keyword id="KW-0812">Transmembrane</keyword>
<keyword id="KW-1133">Transmembrane helix</keyword>
<keyword id="KW-0813">Transport</keyword>
<evidence type="ECO:0000255" key="1"/>
<evidence type="ECO:0000269" key="2">
    <source>
    </source>
</evidence>
<evidence type="ECO:0000305" key="3"/>